<sequence>MTAHAPDPIHQFEVSRLIKISIGNMDLSFTNVSLFTVVTVVITAAFLFISSSSRGLVPTRMQSLSEMAYEFVASTLRESSGVQGMQFFPLVFSLFTFILVANFIGLFPYFYTVTSQIMITFSLAMVVILTVIGYGFYKHGISFLKLFVPSGVPVVVLPLVTMIEIISFLSRPISLSLRLFANMLAGHITLKVFAGFIVSMIGVGIVGVGGAVLPLIMTVAITALEFLVAFLQAYVFTVLTCMYLNDAIHPGH</sequence>
<protein>
    <recommendedName>
        <fullName evidence="1">ATP synthase subunit a</fullName>
    </recommendedName>
    <alternativeName>
        <fullName evidence="1">ATP synthase F0 sector subunit a</fullName>
    </alternativeName>
    <alternativeName>
        <fullName evidence="1">F-ATPase subunit 6</fullName>
    </alternativeName>
</protein>
<reference key="1">
    <citation type="journal article" date="2007" name="Nat. Genet.">
        <title>Genomic analysis of Bartonella identifies type IV secretion systems as host adaptability factors.</title>
        <authorList>
            <person name="Saenz H.L."/>
            <person name="Engel P."/>
            <person name="Stoeckli M.C."/>
            <person name="Lanz C."/>
            <person name="Raddatz G."/>
            <person name="Vayssier-Taussat M."/>
            <person name="Birtles R."/>
            <person name="Schuster S.C."/>
            <person name="Dehio C."/>
        </authorList>
    </citation>
    <scope>NUCLEOTIDE SEQUENCE [LARGE SCALE GENOMIC DNA]</scope>
    <source>
        <strain>CIP 105476 / IBS 506</strain>
    </source>
</reference>
<feature type="chain" id="PRO_0000362242" description="ATP synthase subunit a">
    <location>
        <begin position="1"/>
        <end position="252"/>
    </location>
</feature>
<feature type="transmembrane region" description="Helical" evidence="1">
    <location>
        <begin position="29"/>
        <end position="49"/>
    </location>
</feature>
<feature type="transmembrane region" description="Helical" evidence="1">
    <location>
        <begin position="87"/>
        <end position="107"/>
    </location>
</feature>
<feature type="transmembrane region" description="Helical" evidence="1">
    <location>
        <begin position="117"/>
        <end position="137"/>
    </location>
</feature>
<feature type="transmembrane region" description="Helical" evidence="1">
    <location>
        <begin position="146"/>
        <end position="166"/>
    </location>
</feature>
<feature type="transmembrane region" description="Helical" evidence="1">
    <location>
        <begin position="196"/>
        <end position="216"/>
    </location>
</feature>
<feature type="transmembrane region" description="Helical" evidence="1">
    <location>
        <begin position="219"/>
        <end position="239"/>
    </location>
</feature>
<gene>
    <name evidence="1" type="primary">atpB</name>
    <name type="ordered locus">BT_0622</name>
</gene>
<evidence type="ECO:0000255" key="1">
    <source>
        <dbReference type="HAMAP-Rule" id="MF_01393"/>
    </source>
</evidence>
<evidence type="ECO:0000305" key="2"/>
<proteinExistence type="inferred from homology"/>
<comment type="function">
    <text evidence="1">Key component of the proton channel; it plays a direct role in the translocation of protons across the membrane.</text>
</comment>
<comment type="subunit">
    <text evidence="1">F-type ATPases have 2 components, CF(1) - the catalytic core - and CF(0) - the membrane proton channel. CF(1) has five subunits: alpha(3), beta(3), gamma(1), delta(1), epsilon(1). CF(0) has three main subunits: a(1), b(2) and c(9-12). The alpha and beta chains form an alternating ring which encloses part of the gamma chain. CF(1) is attached to CF(0) by a central stalk formed by the gamma and epsilon chains, while a peripheral stalk is formed by the delta and b chains.</text>
</comment>
<comment type="subcellular location">
    <subcellularLocation>
        <location evidence="1">Cell inner membrane</location>
        <topology evidence="1">Multi-pass membrane protein</topology>
    </subcellularLocation>
</comment>
<comment type="similarity">
    <text evidence="1">Belongs to the ATPase A chain family.</text>
</comment>
<comment type="sequence caution" evidence="2">
    <conflict type="erroneous initiation">
        <sequence resource="EMBL-CDS" id="CAK01060"/>
    </conflict>
</comment>
<name>ATP6_BART1</name>
<dbReference type="EMBL" id="AM260525">
    <property type="protein sequence ID" value="CAK01060.1"/>
    <property type="status" value="ALT_INIT"/>
    <property type="molecule type" value="Genomic_DNA"/>
</dbReference>
<dbReference type="RefSeq" id="WP_038474497.1">
    <property type="nucleotide sequence ID" value="NC_010161.1"/>
</dbReference>
<dbReference type="SMR" id="A9IQH9"/>
<dbReference type="KEGG" id="btr:BT_0622"/>
<dbReference type="eggNOG" id="COG0356">
    <property type="taxonomic scope" value="Bacteria"/>
</dbReference>
<dbReference type="HOGENOM" id="CLU_041018_0_2_5"/>
<dbReference type="Proteomes" id="UP000001592">
    <property type="component" value="Chromosome"/>
</dbReference>
<dbReference type="GO" id="GO:0005886">
    <property type="term" value="C:plasma membrane"/>
    <property type="evidence" value="ECO:0007669"/>
    <property type="project" value="UniProtKB-SubCell"/>
</dbReference>
<dbReference type="GO" id="GO:0045259">
    <property type="term" value="C:proton-transporting ATP synthase complex"/>
    <property type="evidence" value="ECO:0007669"/>
    <property type="project" value="UniProtKB-KW"/>
</dbReference>
<dbReference type="GO" id="GO:0046933">
    <property type="term" value="F:proton-transporting ATP synthase activity, rotational mechanism"/>
    <property type="evidence" value="ECO:0007669"/>
    <property type="project" value="UniProtKB-UniRule"/>
</dbReference>
<dbReference type="CDD" id="cd00310">
    <property type="entry name" value="ATP-synt_Fo_a_6"/>
    <property type="match status" value="1"/>
</dbReference>
<dbReference type="FunFam" id="1.20.120.220:FF:000003">
    <property type="entry name" value="ATP synthase subunit a"/>
    <property type="match status" value="1"/>
</dbReference>
<dbReference type="Gene3D" id="1.20.120.220">
    <property type="entry name" value="ATP synthase, F0 complex, subunit A"/>
    <property type="match status" value="1"/>
</dbReference>
<dbReference type="HAMAP" id="MF_01393">
    <property type="entry name" value="ATP_synth_a_bact"/>
    <property type="match status" value="1"/>
</dbReference>
<dbReference type="InterPro" id="IPR000568">
    <property type="entry name" value="ATP_synth_F0_asu"/>
</dbReference>
<dbReference type="InterPro" id="IPR023011">
    <property type="entry name" value="ATP_synth_F0_asu_AS"/>
</dbReference>
<dbReference type="InterPro" id="IPR045083">
    <property type="entry name" value="ATP_synth_F0_asu_bact/mt"/>
</dbReference>
<dbReference type="InterPro" id="IPR035908">
    <property type="entry name" value="F0_ATP_A_sf"/>
</dbReference>
<dbReference type="NCBIfam" id="TIGR01131">
    <property type="entry name" value="ATP_synt_6_or_A"/>
    <property type="match status" value="1"/>
</dbReference>
<dbReference type="NCBIfam" id="NF004482">
    <property type="entry name" value="PRK05815.2-4"/>
    <property type="match status" value="1"/>
</dbReference>
<dbReference type="PANTHER" id="PTHR11410">
    <property type="entry name" value="ATP SYNTHASE SUBUNIT A"/>
    <property type="match status" value="1"/>
</dbReference>
<dbReference type="PANTHER" id="PTHR11410:SF0">
    <property type="entry name" value="ATP SYNTHASE SUBUNIT A"/>
    <property type="match status" value="1"/>
</dbReference>
<dbReference type="Pfam" id="PF00119">
    <property type="entry name" value="ATP-synt_A"/>
    <property type="match status" value="1"/>
</dbReference>
<dbReference type="PRINTS" id="PR00123">
    <property type="entry name" value="ATPASEA"/>
</dbReference>
<dbReference type="SUPFAM" id="SSF81336">
    <property type="entry name" value="F1F0 ATP synthase subunit A"/>
    <property type="match status" value="1"/>
</dbReference>
<dbReference type="PROSITE" id="PS00449">
    <property type="entry name" value="ATPASE_A"/>
    <property type="match status" value="1"/>
</dbReference>
<accession>A9IQH9</accession>
<organism>
    <name type="scientific">Bartonella tribocorum (strain CIP 105476 / IBS 506)</name>
    <dbReference type="NCBI Taxonomy" id="382640"/>
    <lineage>
        <taxon>Bacteria</taxon>
        <taxon>Pseudomonadati</taxon>
        <taxon>Pseudomonadota</taxon>
        <taxon>Alphaproteobacteria</taxon>
        <taxon>Hyphomicrobiales</taxon>
        <taxon>Bartonellaceae</taxon>
        <taxon>Bartonella</taxon>
    </lineage>
</organism>
<keyword id="KW-0066">ATP synthesis</keyword>
<keyword id="KW-0997">Cell inner membrane</keyword>
<keyword id="KW-1003">Cell membrane</keyword>
<keyword id="KW-0138">CF(0)</keyword>
<keyword id="KW-0375">Hydrogen ion transport</keyword>
<keyword id="KW-0406">Ion transport</keyword>
<keyword id="KW-0472">Membrane</keyword>
<keyword id="KW-0812">Transmembrane</keyword>
<keyword id="KW-1133">Transmembrane helix</keyword>
<keyword id="KW-0813">Transport</keyword>